<reference key="1">
    <citation type="journal article" date="2003" name="Arch. Biochem. Biophys.">
        <title>cDNA isolation, functional expression, and characterization of (+)-alpha-pinene synthase and (-)-alpha-pinene synthase from loblolly pine (Pinus taeda): stereocontrol in pinene biosynthesis.</title>
        <authorList>
            <person name="Phillips M.A."/>
            <person name="Wildung M.R."/>
            <person name="Williams D.C."/>
            <person name="Hyatt D.C."/>
            <person name="Croteau R."/>
        </authorList>
    </citation>
    <scope>NUCLEOTIDE SEQUENCE [MRNA]</scope>
    <scope>FUNCTION</scope>
    <scope>CATALYTIC ACTIVITY</scope>
    <scope>COFACTOR</scope>
    <scope>BIOPHYSICOCHEMICAL PROPERTIES</scope>
    <scope>3D-STRUCTURE MODELING</scope>
</reference>
<feature type="transit peptide" description="Chloroplast" evidence="2">
    <location>
        <begin position="1"/>
        <end position="48"/>
    </location>
</feature>
<feature type="chain" id="PRO_0000419231" description="(+)-alpha-pinene synthase, chloroplastic">
    <location>
        <begin position="49"/>
        <end position="628"/>
    </location>
</feature>
<feature type="short sequence motif" description="DDXXD motif">
    <location>
        <begin position="379"/>
        <end position="383"/>
    </location>
</feature>
<feature type="binding site" evidence="1">
    <location>
        <position position="379"/>
    </location>
    <ligand>
        <name>Mg(2+)</name>
        <dbReference type="ChEBI" id="CHEBI:18420"/>
        <label>1</label>
    </ligand>
</feature>
<feature type="binding site" evidence="1">
    <location>
        <position position="379"/>
    </location>
    <ligand>
        <name>Mg(2+)</name>
        <dbReference type="ChEBI" id="CHEBI:18420"/>
        <label>2</label>
    </ligand>
</feature>
<feature type="binding site" evidence="1">
    <location>
        <position position="383"/>
    </location>
    <ligand>
        <name>Mg(2+)</name>
        <dbReference type="ChEBI" id="CHEBI:18420"/>
        <label>1</label>
    </ligand>
</feature>
<feature type="binding site" evidence="1">
    <location>
        <position position="383"/>
    </location>
    <ligand>
        <name>Mg(2+)</name>
        <dbReference type="ChEBI" id="CHEBI:18420"/>
        <label>2</label>
    </ligand>
</feature>
<feature type="binding site" evidence="1">
    <location>
        <position position="531"/>
    </location>
    <ligand>
        <name>Mg(2+)</name>
        <dbReference type="ChEBI" id="CHEBI:18420"/>
        <label>3</label>
    </ligand>
</feature>
<feature type="binding site" evidence="1">
    <location>
        <position position="539"/>
    </location>
    <ligand>
        <name>K(+)</name>
        <dbReference type="ChEBI" id="CHEBI:29103"/>
    </ligand>
</feature>
<dbReference type="EC" id="4.2.3.121"/>
<dbReference type="EMBL" id="AF543530">
    <property type="protein sequence ID" value="AAO61228.1"/>
    <property type="molecule type" value="mRNA"/>
</dbReference>
<dbReference type="SMR" id="Q84KL3"/>
<dbReference type="KEGG" id="ag:AAO61228"/>
<dbReference type="BRENDA" id="4.2.3.121">
    <property type="organism ID" value="4861"/>
</dbReference>
<dbReference type="UniPathway" id="UPA00924"/>
<dbReference type="GO" id="GO:0009507">
    <property type="term" value="C:chloroplast"/>
    <property type="evidence" value="ECO:0007669"/>
    <property type="project" value="UniProtKB-SubCell"/>
</dbReference>
<dbReference type="GO" id="GO:0000287">
    <property type="term" value="F:magnesium ion binding"/>
    <property type="evidence" value="ECO:0000314"/>
    <property type="project" value="UniProtKB"/>
</dbReference>
<dbReference type="GO" id="GO:0046872">
    <property type="term" value="F:metal ion binding"/>
    <property type="evidence" value="ECO:0000314"/>
    <property type="project" value="UniProtKB"/>
</dbReference>
<dbReference type="GO" id="GO:0050550">
    <property type="term" value="F:pinene synthase activity"/>
    <property type="evidence" value="ECO:0000314"/>
    <property type="project" value="UniProtKB"/>
</dbReference>
<dbReference type="GO" id="GO:0030955">
    <property type="term" value="F:potassium ion binding"/>
    <property type="evidence" value="ECO:0000314"/>
    <property type="project" value="UniProtKB"/>
</dbReference>
<dbReference type="GO" id="GO:0046248">
    <property type="term" value="P:alpha-pinene biosynthetic process"/>
    <property type="evidence" value="ECO:0000314"/>
    <property type="project" value="UniProtKB"/>
</dbReference>
<dbReference type="GO" id="GO:0016102">
    <property type="term" value="P:diterpenoid biosynthetic process"/>
    <property type="evidence" value="ECO:0007669"/>
    <property type="project" value="InterPro"/>
</dbReference>
<dbReference type="GO" id="GO:0033383">
    <property type="term" value="P:geranyl diphosphate metabolic process"/>
    <property type="evidence" value="ECO:0000314"/>
    <property type="project" value="UniProtKB"/>
</dbReference>
<dbReference type="CDD" id="cd00684">
    <property type="entry name" value="Terpene_cyclase_plant_C1"/>
    <property type="match status" value="1"/>
</dbReference>
<dbReference type="FunFam" id="1.50.10.130:FF:000004">
    <property type="entry name" value="Carene synthase, chloroplastic"/>
    <property type="match status" value="1"/>
</dbReference>
<dbReference type="FunFam" id="1.10.600.10:FF:000005">
    <property type="entry name" value="Ent-kaur-16-ene synthase, chloroplastic"/>
    <property type="match status" value="1"/>
</dbReference>
<dbReference type="Gene3D" id="1.10.600.10">
    <property type="entry name" value="Farnesyl Diphosphate Synthase"/>
    <property type="match status" value="1"/>
</dbReference>
<dbReference type="Gene3D" id="1.50.10.130">
    <property type="entry name" value="Terpene synthase, N-terminal domain"/>
    <property type="match status" value="1"/>
</dbReference>
<dbReference type="InterPro" id="IPR008949">
    <property type="entry name" value="Isoprenoid_synthase_dom_sf"/>
</dbReference>
<dbReference type="InterPro" id="IPR034741">
    <property type="entry name" value="Terpene_cyclase-like_1_C"/>
</dbReference>
<dbReference type="InterPro" id="IPR044814">
    <property type="entry name" value="Terpene_cyclase_plant_C1"/>
</dbReference>
<dbReference type="InterPro" id="IPR001906">
    <property type="entry name" value="Terpene_synth_N"/>
</dbReference>
<dbReference type="InterPro" id="IPR036965">
    <property type="entry name" value="Terpene_synth_N_sf"/>
</dbReference>
<dbReference type="InterPro" id="IPR050148">
    <property type="entry name" value="Terpene_synthase-like"/>
</dbReference>
<dbReference type="InterPro" id="IPR005630">
    <property type="entry name" value="Terpene_synthase_metal-bd"/>
</dbReference>
<dbReference type="InterPro" id="IPR008930">
    <property type="entry name" value="Terpenoid_cyclase/PrenylTrfase"/>
</dbReference>
<dbReference type="PANTHER" id="PTHR31739:SF25">
    <property type="entry name" value="(E,E)-GERANYLLINALOOL SYNTHASE"/>
    <property type="match status" value="1"/>
</dbReference>
<dbReference type="PANTHER" id="PTHR31739">
    <property type="entry name" value="ENT-COPALYL DIPHOSPHATE SYNTHASE, CHLOROPLASTIC"/>
    <property type="match status" value="1"/>
</dbReference>
<dbReference type="Pfam" id="PF01397">
    <property type="entry name" value="Terpene_synth"/>
    <property type="match status" value="1"/>
</dbReference>
<dbReference type="Pfam" id="PF03936">
    <property type="entry name" value="Terpene_synth_C"/>
    <property type="match status" value="1"/>
</dbReference>
<dbReference type="SFLD" id="SFLDS00005">
    <property type="entry name" value="Isoprenoid_Synthase_Type_I"/>
    <property type="match status" value="1"/>
</dbReference>
<dbReference type="SFLD" id="SFLDG01019">
    <property type="entry name" value="Terpene_Cyclase_Like_1_C_Termi"/>
    <property type="match status" value="1"/>
</dbReference>
<dbReference type="SFLD" id="SFLDG01014">
    <property type="entry name" value="Terpene_Cyclase_Like_1_N-term"/>
    <property type="match status" value="1"/>
</dbReference>
<dbReference type="SUPFAM" id="SSF48239">
    <property type="entry name" value="Terpenoid cyclases/Protein prenyltransferases"/>
    <property type="match status" value="1"/>
</dbReference>
<dbReference type="SUPFAM" id="SSF48576">
    <property type="entry name" value="Terpenoid synthases"/>
    <property type="match status" value="1"/>
</dbReference>
<gene>
    <name type="primary">PT30</name>
</gene>
<protein>
    <recommendedName>
        <fullName>(+)-alpha-pinene synthase, chloroplastic</fullName>
        <ecNumber>4.2.3.121</ecNumber>
    </recommendedName>
    <alternativeName>
        <fullName>(+)-(3R:5R)-alpha-pinene synthase</fullName>
    </alternativeName>
    <alternativeName>
        <fullName>Synthase II</fullName>
    </alternativeName>
</protein>
<comment type="function">
    <text evidence="3">Involved in defensive oleoresin formation in conifers in response to insect attack or other injury. Involved in monoterpene (C10) olefins biosynthesis. Produces mainly (+)-alpha-pinene (97%) with a small amount of (-)-alpha-pinene (3%).</text>
</comment>
<comment type="catalytic activity">
    <reaction evidence="3">
        <text>(2E)-geranyl diphosphate = (1R,5R)-alpha-pinene + diphosphate</text>
        <dbReference type="Rhea" id="RHEA:32575"/>
        <dbReference type="ChEBI" id="CHEBI:28261"/>
        <dbReference type="ChEBI" id="CHEBI:33019"/>
        <dbReference type="ChEBI" id="CHEBI:58057"/>
        <dbReference type="EC" id="4.2.3.121"/>
    </reaction>
</comment>
<comment type="cofactor">
    <cofactor evidence="5">
        <name>Mg(2+)</name>
        <dbReference type="ChEBI" id="CHEBI:18420"/>
    </cofactor>
    <cofactor evidence="5">
        <name>Mn(2+)</name>
        <dbReference type="ChEBI" id="CHEBI:29035"/>
    </cofactor>
    <text evidence="5">Binds 3 Mg(2+) or Mn(2+) ions per subunit.</text>
</comment>
<comment type="cofactor">
    <cofactor evidence="3">
        <name>K(+)</name>
        <dbReference type="ChEBI" id="CHEBI:29103"/>
    </cofactor>
</comment>
<comment type="biophysicochemical properties">
    <kinetics>
        <KM evidence="3">47 uM for geranyl diphosphate</KM>
    </kinetics>
    <phDependence>
        <text evidence="3">Optimum pH is 7.5.</text>
    </phDependence>
</comment>
<comment type="pathway">
    <text>Terpene metabolism; oleoresin biosynthesis.</text>
</comment>
<comment type="subcellular location">
    <subcellularLocation>
        <location evidence="4">Plastid</location>
        <location evidence="4">Chloroplast</location>
    </subcellularLocation>
</comment>
<comment type="domain">
    <text>The Asp-Asp-Xaa-Xaa-Asp/Glu (DDXXD/E) motif is important for the catalytic activity, presumably through binding to Mg(2+).</text>
</comment>
<comment type="similarity">
    <text evidence="4">Belongs to the terpene synthase family. Tpsd subfamily.</text>
</comment>
<keyword id="KW-0150">Chloroplast</keyword>
<keyword id="KW-0456">Lyase</keyword>
<keyword id="KW-0460">Magnesium</keyword>
<keyword id="KW-0464">Manganese</keyword>
<keyword id="KW-0479">Metal-binding</keyword>
<keyword id="KW-0934">Plastid</keyword>
<keyword id="KW-0630">Potassium</keyword>
<keyword id="KW-0809">Transit peptide</keyword>
<organism>
    <name type="scientific">Pinus taeda</name>
    <name type="common">Loblolly pine</name>
    <dbReference type="NCBI Taxonomy" id="3352"/>
    <lineage>
        <taxon>Eukaryota</taxon>
        <taxon>Viridiplantae</taxon>
        <taxon>Streptophyta</taxon>
        <taxon>Embryophyta</taxon>
        <taxon>Tracheophyta</taxon>
        <taxon>Spermatophyta</taxon>
        <taxon>Pinopsida</taxon>
        <taxon>Pinidae</taxon>
        <taxon>Conifers I</taxon>
        <taxon>Pinales</taxon>
        <taxon>Pinaceae</taxon>
        <taxon>Pinus</taxon>
        <taxon>Pinus subgen. Pinus</taxon>
    </lineage>
</organism>
<accession>Q84KL3</accession>
<sequence>MALVSAVPLNSKLCLRRTLFGFSHELKAIHSTVPNLGMCRGGKSIAPSMSMSSTTSVSNEDGVPRRIAGHHSNLWDDDSIASLSTSYEAPSYRKRADKLIGEVKNIFDLMSVEDGVFTSPLSDLHHRLWMVDSVERLGIDRHFKDEINSALDHVYSYWTEKGIGRGRESGVTDLNSTALGLRTLRLHGYTVSSHVLDHFKNEKGQFTCSAIQTEGEIRDVLNLFRASLIAFPGEKIMEAAEIFSTMYLKDALQKIPPSGLSQEIEYLLEFGWHTNLPRMETRMYIDVFGEDTTFETPYLIREKLLELAKLEFNIFHSLVKRELQSLSRWWKDYGFPEITFSRHRHVEYYTLAACIANDPKHSAFRLGFGKISHMITILDDIYDTFGTMEELKLLTAAFKRWDPSSIECLPDYMKGVYMAVYDNINEMAREAQKIQGWDTVSYARKSWEAFIGAYIQEAKWISSGYLPTFDEYLENGKVSFGSRITTLEPMLTLGFPLPPRILQEIDFPSKFNDLICAILRLKGDTQCYKADRARGEEASAVSCYMKDHPGITEEDAVNQVNAMVDNLTKELNWELLRPDSGVPISYKKVAFDICRVFHYGYKYRDGFSVASIEIKNLVTRTVVETVPL</sequence>
<name>PT30_PINTA</name>
<evidence type="ECO:0000250" key="1"/>
<evidence type="ECO:0000255" key="2"/>
<evidence type="ECO:0000269" key="3">
    <source>
    </source>
</evidence>
<evidence type="ECO:0000305" key="4"/>
<evidence type="ECO:0000305" key="5">
    <source>
    </source>
</evidence>
<proteinExistence type="evidence at protein level"/>